<keyword id="KW-0963">Cytoplasm</keyword>
<keyword id="KW-0312">Gluconeogenesis</keyword>
<keyword id="KW-0324">Glycolysis</keyword>
<keyword id="KW-0413">Isomerase</keyword>
<keyword id="KW-1185">Reference proteome</keyword>
<proteinExistence type="inferred from homology"/>
<gene>
    <name type="primary">PGI1</name>
    <name type="ordered locus">AEL249C</name>
</gene>
<name>G6PI_EREGS</name>
<dbReference type="EC" id="5.3.1.9" evidence="1"/>
<dbReference type="EMBL" id="AE016818">
    <property type="protein sequence ID" value="AAS52436.1"/>
    <property type="molecule type" value="Genomic_DNA"/>
</dbReference>
<dbReference type="RefSeq" id="NP_984612.1">
    <property type="nucleotide sequence ID" value="NM_209965.1"/>
</dbReference>
<dbReference type="SMR" id="Q758L0"/>
<dbReference type="FunCoup" id="Q758L0">
    <property type="interactions" value="1223"/>
</dbReference>
<dbReference type="STRING" id="284811.Q758L0"/>
<dbReference type="EnsemblFungi" id="AAS52436">
    <property type="protein sequence ID" value="AAS52436"/>
    <property type="gene ID" value="AGOS_AEL249C"/>
</dbReference>
<dbReference type="GeneID" id="4620794"/>
<dbReference type="KEGG" id="ago:AGOS_AEL249C"/>
<dbReference type="eggNOG" id="KOG2446">
    <property type="taxonomic scope" value="Eukaryota"/>
</dbReference>
<dbReference type="HOGENOM" id="CLU_017947_3_1_1"/>
<dbReference type="InParanoid" id="Q758L0"/>
<dbReference type="OMA" id="DWYRQLW"/>
<dbReference type="OrthoDB" id="5831190at2759"/>
<dbReference type="UniPathway" id="UPA00109">
    <property type="reaction ID" value="UER00181"/>
</dbReference>
<dbReference type="Proteomes" id="UP000000591">
    <property type="component" value="Chromosome V"/>
</dbReference>
<dbReference type="GO" id="GO:0005829">
    <property type="term" value="C:cytosol"/>
    <property type="evidence" value="ECO:0000318"/>
    <property type="project" value="GO_Central"/>
</dbReference>
<dbReference type="GO" id="GO:0005739">
    <property type="term" value="C:mitochondrion"/>
    <property type="evidence" value="ECO:0007669"/>
    <property type="project" value="EnsemblFungi"/>
</dbReference>
<dbReference type="GO" id="GO:0097367">
    <property type="term" value="F:carbohydrate derivative binding"/>
    <property type="evidence" value="ECO:0007669"/>
    <property type="project" value="InterPro"/>
</dbReference>
<dbReference type="GO" id="GO:0004347">
    <property type="term" value="F:glucose-6-phosphate isomerase activity"/>
    <property type="evidence" value="ECO:0000318"/>
    <property type="project" value="GO_Central"/>
</dbReference>
<dbReference type="GO" id="GO:0048029">
    <property type="term" value="F:monosaccharide binding"/>
    <property type="evidence" value="ECO:0000318"/>
    <property type="project" value="GO_Central"/>
</dbReference>
<dbReference type="GO" id="GO:0006094">
    <property type="term" value="P:gluconeogenesis"/>
    <property type="evidence" value="ECO:0000318"/>
    <property type="project" value="GO_Central"/>
</dbReference>
<dbReference type="GO" id="GO:0051156">
    <property type="term" value="P:glucose 6-phosphate metabolic process"/>
    <property type="evidence" value="ECO:0000318"/>
    <property type="project" value="GO_Central"/>
</dbReference>
<dbReference type="GO" id="GO:0006096">
    <property type="term" value="P:glycolytic process"/>
    <property type="evidence" value="ECO:0000318"/>
    <property type="project" value="GO_Central"/>
</dbReference>
<dbReference type="CDD" id="cd05015">
    <property type="entry name" value="SIS_PGI_1"/>
    <property type="match status" value="1"/>
</dbReference>
<dbReference type="CDD" id="cd05016">
    <property type="entry name" value="SIS_PGI_2"/>
    <property type="match status" value="1"/>
</dbReference>
<dbReference type="FunFam" id="1.10.1390.10:FF:000001">
    <property type="entry name" value="Glucose-6-phosphate isomerase"/>
    <property type="match status" value="1"/>
</dbReference>
<dbReference type="FunFam" id="3.40.50.10490:FF:000004">
    <property type="entry name" value="Glucose-6-phosphate isomerase"/>
    <property type="match status" value="1"/>
</dbReference>
<dbReference type="Gene3D" id="1.10.1390.10">
    <property type="match status" value="1"/>
</dbReference>
<dbReference type="Gene3D" id="3.40.50.10490">
    <property type="entry name" value="Glucose-6-phosphate isomerase like protein, domain 1"/>
    <property type="match status" value="2"/>
</dbReference>
<dbReference type="HAMAP" id="MF_00473">
    <property type="entry name" value="G6P_isomerase"/>
    <property type="match status" value="1"/>
</dbReference>
<dbReference type="InterPro" id="IPR001672">
    <property type="entry name" value="G6P_Isomerase"/>
</dbReference>
<dbReference type="InterPro" id="IPR023096">
    <property type="entry name" value="G6P_Isomerase_C"/>
</dbReference>
<dbReference type="InterPro" id="IPR018189">
    <property type="entry name" value="Phosphoglucose_isomerase_CS"/>
</dbReference>
<dbReference type="InterPro" id="IPR046348">
    <property type="entry name" value="SIS_dom_sf"/>
</dbReference>
<dbReference type="InterPro" id="IPR035476">
    <property type="entry name" value="SIS_PGI_1"/>
</dbReference>
<dbReference type="InterPro" id="IPR035482">
    <property type="entry name" value="SIS_PGI_2"/>
</dbReference>
<dbReference type="NCBIfam" id="NF001211">
    <property type="entry name" value="PRK00179.1"/>
    <property type="match status" value="1"/>
</dbReference>
<dbReference type="PANTHER" id="PTHR11469">
    <property type="entry name" value="GLUCOSE-6-PHOSPHATE ISOMERASE"/>
    <property type="match status" value="1"/>
</dbReference>
<dbReference type="PANTHER" id="PTHR11469:SF1">
    <property type="entry name" value="GLUCOSE-6-PHOSPHATE ISOMERASE"/>
    <property type="match status" value="1"/>
</dbReference>
<dbReference type="Pfam" id="PF00342">
    <property type="entry name" value="PGI"/>
    <property type="match status" value="1"/>
</dbReference>
<dbReference type="PRINTS" id="PR00662">
    <property type="entry name" value="G6PISOMERASE"/>
</dbReference>
<dbReference type="SUPFAM" id="SSF53697">
    <property type="entry name" value="SIS domain"/>
    <property type="match status" value="1"/>
</dbReference>
<dbReference type="PROSITE" id="PS00765">
    <property type="entry name" value="P_GLUCOSE_ISOMERASE_1"/>
    <property type="match status" value="1"/>
</dbReference>
<dbReference type="PROSITE" id="PS00174">
    <property type="entry name" value="P_GLUCOSE_ISOMERASE_2"/>
    <property type="match status" value="1"/>
</dbReference>
<dbReference type="PROSITE" id="PS51463">
    <property type="entry name" value="P_GLUCOSE_ISOMERASE_3"/>
    <property type="match status" value="1"/>
</dbReference>
<comment type="function">
    <text evidence="1">In the cytoplasm, catalyzes the conversion of glucose-6-phosphate to fructose-6-phosphate, the second step in glycolysis, and the reverse reaction during gluconeogenesis.</text>
</comment>
<comment type="catalytic activity">
    <reaction evidence="1">
        <text>alpha-D-glucose 6-phosphate = beta-D-fructose 6-phosphate</text>
        <dbReference type="Rhea" id="RHEA:11816"/>
        <dbReference type="ChEBI" id="CHEBI:57634"/>
        <dbReference type="ChEBI" id="CHEBI:58225"/>
        <dbReference type="EC" id="5.3.1.9"/>
    </reaction>
</comment>
<comment type="pathway">
    <text evidence="4">Carbohydrate degradation; glycolysis; D-glyceraldehyde 3-phosphate and glycerone phosphate from D-glucose: step 2/4.</text>
</comment>
<comment type="subunit">
    <text evidence="1">Homodimer.</text>
</comment>
<comment type="subcellular location">
    <subcellularLocation>
        <location evidence="3">Cytoplasm</location>
        <location evidence="3">Cytosol</location>
    </subcellularLocation>
</comment>
<comment type="similarity">
    <text evidence="4">Belongs to the GPI family.</text>
</comment>
<accession>Q758L0</accession>
<organism>
    <name type="scientific">Eremothecium gossypii (strain ATCC 10895 / CBS 109.51 / FGSC 9923 / NRRL Y-1056)</name>
    <name type="common">Yeast</name>
    <name type="synonym">Ashbya gossypii</name>
    <dbReference type="NCBI Taxonomy" id="284811"/>
    <lineage>
        <taxon>Eukaryota</taxon>
        <taxon>Fungi</taxon>
        <taxon>Dikarya</taxon>
        <taxon>Ascomycota</taxon>
        <taxon>Saccharomycotina</taxon>
        <taxon>Saccharomycetes</taxon>
        <taxon>Saccharomycetales</taxon>
        <taxon>Saccharomycetaceae</taxon>
        <taxon>Eremothecium</taxon>
    </lineage>
</organism>
<sequence length="555" mass="61257">MATTNTFSDFKLASELPAWAKLQELYEKKGKTLSLKEAFATDEQRFQKYSRTFSNHDGSKILFDFSKNLVDDEILGALAQLAREANVTQLRDQMFNGEHINSTEDRAVYHVALRNRANKPMYVDGKNVAPEVDAVLQHMKEFSEQVRSGAWKGYTGKSIKDVVNIGIGGSDLGPVMVTEALKHYAGPLKVHFVSNIDGTHLAETLKEVDPETTLFLVASKTFTTAETITNATSAKNWFLSKTGNNPAHISKHFAALSTNETEVAKFGIDTKNMFGFESWVGGRYSVWSAIGLSVALYIGFDQFEDFLKGAEAVDKHFTSTPIEDNIPLLGGLLSVWYNNFFDAQTHLVVPFDQYLHRFPAYLQQLSMESNGKSVTRGNVFANYSTGSILFGEPATNAQHSFFQLVHQGTKVIPSDFILAAQSHNPIENNLHQKMLASNFFAQAEALMVGKDEAQVKAEGATGGLVPHKVFSGNRPTTSILVQKITPANLGALIAYYEHVTFTEGAIWNINSFDQWGVELGKVLAKVIGKDLDTTGETTSHDASTNGLINQFKAWL</sequence>
<protein>
    <recommendedName>
        <fullName>Glucose-6-phosphate isomerase</fullName>
        <shortName>GPI</shortName>
        <ecNumber evidence="1">5.3.1.9</ecNumber>
    </recommendedName>
    <alternativeName>
        <fullName>Phosphoglucose isomerase</fullName>
        <shortName>PGI</shortName>
    </alternativeName>
    <alternativeName>
        <fullName>Phosphohexose isomerase</fullName>
        <shortName>PHI</shortName>
    </alternativeName>
</protein>
<feature type="chain" id="PRO_0000180570" description="Glucose-6-phosphate isomerase">
    <location>
        <begin position="1"/>
        <end position="555"/>
    </location>
</feature>
<feature type="active site" description="Proton donor" evidence="1">
    <location>
        <position position="368"/>
    </location>
</feature>
<feature type="active site" evidence="1">
    <location>
        <position position="399"/>
    </location>
</feature>
<feature type="active site" evidence="1">
    <location>
        <position position="521"/>
    </location>
</feature>
<feature type="binding site" evidence="2">
    <location>
        <begin position="169"/>
        <end position="170"/>
    </location>
    <ligand>
        <name>D-glucose 6-phosphate</name>
        <dbReference type="ChEBI" id="CHEBI:61548"/>
    </ligand>
</feature>
<feature type="binding site" evidence="2">
    <location>
        <begin position="219"/>
        <end position="224"/>
    </location>
    <ligand>
        <name>D-glucose 6-phosphate</name>
        <dbReference type="ChEBI" id="CHEBI:61548"/>
    </ligand>
</feature>
<feature type="binding site" evidence="2">
    <location>
        <position position="364"/>
    </location>
    <ligand>
        <name>D-glucose 6-phosphate</name>
        <dbReference type="ChEBI" id="CHEBI:61548"/>
    </ligand>
</feature>
<feature type="binding site" evidence="2">
    <location>
        <position position="368"/>
    </location>
    <ligand>
        <name>D-glucose 6-phosphate</name>
        <dbReference type="ChEBI" id="CHEBI:61548"/>
    </ligand>
</feature>
<feature type="binding site" evidence="2">
    <location>
        <position position="399"/>
    </location>
    <ligand>
        <name>D-glucose 6-phosphate</name>
        <dbReference type="ChEBI" id="CHEBI:61548"/>
    </ligand>
</feature>
<feature type="binding site" evidence="2">
    <location>
        <position position="521"/>
    </location>
    <ligand>
        <name>D-glucose 6-phosphate</name>
        <dbReference type="ChEBI" id="CHEBI:61548"/>
    </ligand>
</feature>
<reference key="1">
    <citation type="journal article" date="2004" name="Science">
        <title>The Ashbya gossypii genome as a tool for mapping the ancient Saccharomyces cerevisiae genome.</title>
        <authorList>
            <person name="Dietrich F.S."/>
            <person name="Voegeli S."/>
            <person name="Brachat S."/>
            <person name="Lerch A."/>
            <person name="Gates K."/>
            <person name="Steiner S."/>
            <person name="Mohr C."/>
            <person name="Poehlmann R."/>
            <person name="Luedi P."/>
            <person name="Choi S."/>
            <person name="Wing R.A."/>
            <person name="Flavier A."/>
            <person name="Gaffney T.D."/>
            <person name="Philippsen P."/>
        </authorList>
    </citation>
    <scope>NUCLEOTIDE SEQUENCE [LARGE SCALE GENOMIC DNA]</scope>
    <source>
        <strain>ATCC 10895 / CBS 109.51 / FGSC 9923 / NRRL Y-1056</strain>
    </source>
</reference>
<reference key="2">
    <citation type="journal article" date="2013" name="G3 (Bethesda)">
        <title>Genomes of Ashbya fungi isolated from insects reveal four mating-type loci, numerous translocations, lack of transposons, and distinct gene duplications.</title>
        <authorList>
            <person name="Dietrich F.S."/>
            <person name="Voegeli S."/>
            <person name="Kuo S."/>
            <person name="Philippsen P."/>
        </authorList>
    </citation>
    <scope>GENOME REANNOTATION</scope>
    <source>
        <strain>ATCC 10895 / CBS 109.51 / FGSC 9923 / NRRL Y-1056</strain>
    </source>
</reference>
<evidence type="ECO:0000250" key="1">
    <source>
        <dbReference type="UniProtKB" id="P06744"/>
    </source>
</evidence>
<evidence type="ECO:0000250" key="2">
    <source>
        <dbReference type="UniProtKB" id="P06745"/>
    </source>
</evidence>
<evidence type="ECO:0000250" key="3">
    <source>
        <dbReference type="UniProtKB" id="P78917"/>
    </source>
</evidence>
<evidence type="ECO:0000305" key="4"/>